<keyword id="KW-0106">Calcium</keyword>
<keyword id="KW-0963">Cytoplasm</keyword>
<keyword id="KW-0223">Dioxygenase</keyword>
<keyword id="KW-0408">Iron</keyword>
<keyword id="KW-0443">Lipid metabolism</keyword>
<keyword id="KW-0446">Lipid-binding</keyword>
<keyword id="KW-0472">Membrane</keyword>
<keyword id="KW-0479">Metal-binding</keyword>
<keyword id="KW-0560">Oxidoreductase</keyword>
<keyword id="KW-1185">Reference proteome</keyword>
<comment type="function">
    <text evidence="5 6 8 9 10 11 12">Non-heme iron-containing dioxygenase that catalyzes the stereo-specific peroxidation of free and esterified polyunsaturated fatty acids generating a spectrum of bioactive lipid mediators (PubMed:10625675, PubMed:10965849, PubMed:15558016, PubMed:16112079, PubMed:16143298, PubMed:27435673, PubMed:9305900). Catalyzes the peroxidation of arachidonate and linoleate into (8S)-HPETE and (9S)-HPODE respectively (PubMed:10625675, PubMed:10965849, PubMed:15558016, PubMed:16112079, PubMed:16143298, PubMed:27435673, PubMed:9305900). In addition to generate (8S)-HPETE from free arachidonic acid (AA), may produce other HETE isomers from phospholipid-esterified polyunsaturated fatty acids and minor products derived from (8S)-HPETE itself that may include leukotriene A4 and 8,15-diHPETE (PubMed:16112079, PubMed:16143298, PubMed:27435673). With free arachidonate as substrate, has no detectable 15S-lipoxygenase activity and only displays a 8S-lipoxygenase activity (PubMed:10625675, PubMed:10965849, PubMed:15558016, PubMed:16112079, PubMed:16143298, PubMed:9305900). However may have a 15S-lipoxygenase activity with (8S)-HPETE to produce (8S,15S)-diHPETE and when oxidizes directly arachidonic acid esterified to membrane-bound phospholipids to produce a phospholipid-esterified 15-HpETE (PubMed:16112079, PubMed:16143298, PubMed:27435673). May also catalyze (15S)-HPETE peroxidation to produce 8,15-diHPETE (PubMed:16112079). May play a role in keratinocyte differentiation through activation of the peroxisome proliferator activated receptor signaling pathway (PubMed:10965849).</text>
</comment>
<comment type="catalytic activity">
    <reaction evidence="8 12 16">
        <text>(9Z,12Z)-octadecadienoate + O2 = (9S)-hydroperoxy-(10E,12Z)-octadecadienoate</text>
        <dbReference type="Rhea" id="RHEA:30291"/>
        <dbReference type="ChEBI" id="CHEBI:15379"/>
        <dbReference type="ChEBI" id="CHEBI:30245"/>
        <dbReference type="ChEBI" id="CHEBI:60955"/>
        <dbReference type="EC" id="1.13.11.58"/>
    </reaction>
    <physiologicalReaction direction="left-to-right" evidence="17">
        <dbReference type="Rhea" id="RHEA:30292"/>
    </physiologicalReaction>
</comment>
<comment type="catalytic activity">
    <reaction evidence="5 6 8 9 10 12 16">
        <text>(5Z,8Z,11Z,14Z)-eicosatetraenoate + O2 = (8S)-hydroperoxy-(5Z,9E,11Z,14Z)-eicosatetraenoate</text>
        <dbReference type="Rhea" id="RHEA:38675"/>
        <dbReference type="ChEBI" id="CHEBI:15379"/>
        <dbReference type="ChEBI" id="CHEBI:32395"/>
        <dbReference type="ChEBI" id="CHEBI:75322"/>
    </reaction>
    <physiologicalReaction direction="left-to-right" evidence="15">
        <dbReference type="Rhea" id="RHEA:38676"/>
    </physiologicalReaction>
</comment>
<comment type="catalytic activity">
    <reaction evidence="9">
        <text>(15S)-hydroperoxy-(5Z,8Z,11Z,13E)-eicosatetraenoate + O2 = (8S,15S)-dihydroperoxy-(5Z,9E,11Z,13E)-eicosatetraenoate</text>
        <dbReference type="Rhea" id="RHEA:50972"/>
        <dbReference type="ChEBI" id="CHEBI:15379"/>
        <dbReference type="ChEBI" id="CHEBI:57446"/>
        <dbReference type="ChEBI" id="CHEBI:133899"/>
    </reaction>
    <physiologicalReaction direction="left-to-right" evidence="15">
        <dbReference type="Rhea" id="RHEA:50973"/>
    </physiologicalReaction>
</comment>
<comment type="catalytic activity">
    <reaction evidence="9 10">
        <text>(8S)-hydroperoxy-(5Z,9E,11Z,14Z)-eicosatetraenoate + O2 = (8S,15S)-dihydroperoxy-(5Z,9E,11Z,13E)-eicosatetraenoate</text>
        <dbReference type="Rhea" id="RHEA:50932"/>
        <dbReference type="ChEBI" id="CHEBI:15379"/>
        <dbReference type="ChEBI" id="CHEBI:75322"/>
        <dbReference type="ChEBI" id="CHEBI:133899"/>
    </reaction>
    <physiologicalReaction direction="left-to-right" evidence="15">
        <dbReference type="Rhea" id="RHEA:50933"/>
    </physiologicalReaction>
</comment>
<comment type="catalytic activity">
    <reaction evidence="11">
        <text>1-octadecanoyl-2-(5Z,8Z,11Z,14Z-eicosatetraenoyl)-sn-glycero-3-phosphocholine + O2 = 1-octadecanoyl-2-(15-hydroperoxy-5Z,8Z,11Z,13E-eicosatetraenoyl)-sn-glycero-3-phosphocholine</text>
        <dbReference type="Rhea" id="RHEA:63264"/>
        <dbReference type="ChEBI" id="CHEBI:15379"/>
        <dbReference type="ChEBI" id="CHEBI:74965"/>
        <dbReference type="ChEBI" id="CHEBI:146283"/>
    </reaction>
    <physiologicalReaction direction="left-to-right" evidence="16">
        <dbReference type="Rhea" id="RHEA:63265"/>
    </physiologicalReaction>
</comment>
<comment type="catalytic activity">
    <reaction evidence="11">
        <text>a 1-acyl-2-(5Z,8Z,11Z,14Z-eicosatetraenoyl)-sn-glycero-3-phospho-(1D-myo-inositol) + O2 = a 1-acyl-2-(15-hydroperoxy-5Z,8Z,11Z,13E-eicosatetraenoyl)-sn-glycero-3-phospho-(1D-myo-inositol)</text>
        <dbReference type="Rhea" id="RHEA:63276"/>
        <dbReference type="ChEBI" id="CHEBI:15379"/>
        <dbReference type="ChEBI" id="CHEBI:75243"/>
        <dbReference type="ChEBI" id="CHEBI:146285"/>
    </reaction>
    <physiologicalReaction direction="left-to-right" evidence="16">
        <dbReference type="Rhea" id="RHEA:63277"/>
    </physiologicalReaction>
</comment>
<comment type="catalytic activity">
    <reaction evidence="11">
        <text>a 1-acyl-2-(8Z,11Z,14Z-eicosatrienoyl)-sn-glycero-3-phospho-(1D-myo-inositol) + O2 = a 1-acyl-2-(15-hydroperoxy-8Z,11Z,13E-eicosatrienoyl)-sn-glycero-3-phospho-(1D-myo-inositol)</text>
        <dbReference type="Rhea" id="RHEA:63280"/>
        <dbReference type="ChEBI" id="CHEBI:15379"/>
        <dbReference type="ChEBI" id="CHEBI:146286"/>
        <dbReference type="ChEBI" id="CHEBI:146287"/>
    </reaction>
    <physiologicalReaction direction="left-to-right" evidence="16">
        <dbReference type="Rhea" id="RHEA:63281"/>
    </physiologicalReaction>
</comment>
<comment type="catalytic activity">
    <reaction evidence="11">
        <text>(5Z,8Z,11Z,14Z)-eicosatetraenoate + O2 = 9-hydroperoxy-(5Z,7E,11Z,14Z)-eicosatetraenoate</text>
        <dbReference type="Rhea" id="RHEA:63288"/>
        <dbReference type="ChEBI" id="CHEBI:15379"/>
        <dbReference type="ChEBI" id="CHEBI:32395"/>
        <dbReference type="ChEBI" id="CHEBI:146289"/>
    </reaction>
    <physiologicalReaction direction="left-to-right" evidence="11">
        <dbReference type="Rhea" id="RHEA:63289"/>
    </physiologicalReaction>
</comment>
<comment type="catalytic activity">
    <reaction evidence="11">
        <text>(5Z,8Z,11Z,14Z)-eicosatetraenoate + O2 = 11-hydroperoxy-(5Z,8Z,12E,14Z)-eicosatetraenoate</text>
        <dbReference type="Rhea" id="RHEA:63308"/>
        <dbReference type="ChEBI" id="CHEBI:15379"/>
        <dbReference type="ChEBI" id="CHEBI:32395"/>
        <dbReference type="ChEBI" id="CHEBI:146291"/>
    </reaction>
    <physiologicalReaction direction="left-to-right" evidence="11">
        <dbReference type="Rhea" id="RHEA:63309"/>
    </physiologicalReaction>
</comment>
<comment type="catalytic activity">
    <reaction evidence="11">
        <text>(8Z,11Z,14Z)-eicosatrienoate + O2 = 15-hydroperoxy-(8Z,11Z,13E)-eicosatrienoate</text>
        <dbReference type="Rhea" id="RHEA:63312"/>
        <dbReference type="ChEBI" id="CHEBI:15379"/>
        <dbReference type="ChEBI" id="CHEBI:71589"/>
        <dbReference type="ChEBI" id="CHEBI:146292"/>
    </reaction>
    <physiologicalReaction direction="left-to-right" evidence="11">
        <dbReference type="Rhea" id="RHEA:63313"/>
    </physiologicalReaction>
</comment>
<comment type="cofactor">
    <cofactor evidence="2 4">
        <name>Fe cation</name>
        <dbReference type="ChEBI" id="CHEBI:24875"/>
    </cofactor>
    <text evidence="2 4">Binds 1 Fe cation per subunit.</text>
</comment>
<comment type="biophysicochemical properties">
    <kinetics>
        <KM evidence="9">1.2 uM for arachidonate (at pH 7.4 and 25 degrees Celsius)</KM>
        <KM evidence="9">2.1 uM for (8S)-HPETE (at pH 7.4 and 25 degrees Celsius)</KM>
        <KM evidence="9">5.7 uM for (8S)-HETE (at pH 7.4 and 25 degrees Celsius)</KM>
        <KM evidence="9">39 uM for (15S)-HPETE (at pH 7.4 and 25 degrees Celsius)</KM>
        <KM evidence="9">15 uM for (15S)-HETE (at pH 7.4 and 25 degrees Celsius)</KM>
        <KM evidence="11">2.86 uM for (5Z,8Z,11Z,14Z)-eicosatetraenoate</KM>
        <KM evidence="11">0.964 uM for (8Z,11Z,14Z)-eicosatrienoate</KM>
        <text evidence="9 11">The highest catalytic efficiency is observed with arachidonate followed by (8S)-HPETE and(15S)-HPETE with similar efficiencies (PubMed:16112079). kcat is 0.22 sec(-1) for (5Z,8Z,11Z,14Z)-eicosatetraenoate. kcat is 0.045 sec(-1) for (8Z,11Z,14Z)-eicosatrienoate (PubMed:27435673).</text>
    </kinetics>
</comment>
<comment type="pathway">
    <text evidence="12">Lipid metabolism; hydroperoxy eicosatetraenoic acid biosynthesis.</text>
</comment>
<comment type="subcellular location">
    <subcellularLocation>
        <location evidence="2">Cytoplasm</location>
        <location evidence="2">Cytosol</location>
    </subcellularLocation>
    <subcellularLocation>
        <location evidence="2">Membrane</location>
        <topology evidence="2">Peripheral membrane protein</topology>
    </subcellularLocation>
    <text evidence="2">Predominantly cytosolic; becomes enriched at membranes upon calcium binding.</text>
</comment>
<comment type="tissue specificity">
    <text evidence="12 13">Expressed in epidermis and brain (PubMed:9305900, PubMed:9518531). No expression found in heart, spleen, liver, skeletal muscle, kidney or testis.</text>
</comment>
<comment type="induction">
    <text evidence="12">By phorbol ester.</text>
</comment>
<comment type="domain">
    <text evidence="1">The PLAT domain can bind calcium ions; this promotes association with membranes.</text>
</comment>
<comment type="similarity">
    <text evidence="14">Belongs to the lipoxygenase family.</text>
</comment>
<protein>
    <recommendedName>
        <fullName evidence="14">Polyunsaturated fatty acid lipoxygenase ALOX8</fullName>
    </recommendedName>
    <alternativeName>
        <fullName evidence="2">15-lipoxygenase 2</fullName>
        <shortName evidence="2">15-LOX-2</shortName>
    </alternativeName>
    <alternativeName>
        <fullName>Arachidonate 15-lipoxygenase B</fullName>
        <shortName>15-LOX-B</shortName>
    </alternativeName>
    <alternativeName>
        <fullName>Arachidonate 8S-lipoxygenase</fullName>
        <shortName>8-LOX</shortName>
        <shortName>8S-LOX</shortName>
        <ecNumber evidence="5 6 8 9 10 12 16">1.13.11.-</ecNumber>
    </alternativeName>
    <alternativeName>
        <fullName evidence="14">Linoleate 9S-lipoxygenase ALOX8</fullName>
        <ecNumber evidence="8 12 16">1.13.11.58</ecNumber>
    </alternativeName>
</protein>
<sequence>MAKCRVRVSTGEACGAGTWDKVSVSIVGTHGESPLVPLDHLGKEFSAGAEEDFEVTLPQDVGTVLMLRVHKAPPEVSLPLMSFRSDAWFCRWFELEWLPGAALHFPCYQWLEGAGELVLREGAAKVSWQDHHPTLQDQRQKELESRQKMYSWKTYIEGWPRCLDHETVKDLDLNIKYSAMKNAKLFFKAHSAYTELKVKGLLDRTGLWRSLREMRRLFNFRKTPAAEYVFAHWQEDAFFASQFLNGINPVLIRRCHSLPNNFPVTDEMVAPVLGPGTSLQAELEKGSLFLVDHGILSGVHTNILNGKPQFSAAPMTLLHQSSGSGPLLPIAIQLKQTPGPDNPIFLPSDDTWDWLLAKTWVRNSEFYIHEAVTHLLHAHLIPEVFALATLRQLPRCHPLFKLLIPHIRYTLHINTLARELLVAPGKLIDKSTGLGTGGFSDLIKRNMEQLNYSVLCLPEDIRARGVEDIPGYYYRDDGMQIWGAIKSFVSEIVSIYYPSDTSVQDDQELQAWVREIFSEGFLGRESSGMPSLLDTREALVQYITMVIFTCSAKHAAVSSGQFDSCVWMPNLPPTMQLPPPTSKGQARPESFIATLPAVNSSSYHIIALWLLSAEPGDQRPLGHYPDEHFTEDAPRRSVAAFQRKLIQISKGIRERNRGLALPYTYLDPPLIENSVSI</sequence>
<accession>O35936</accession>
<accession>B1ASX5</accession>
<dbReference type="EC" id="1.13.11.-" evidence="5 6 8 9 10 12 16"/>
<dbReference type="EC" id="1.13.11.58" evidence="8 12 16"/>
<dbReference type="EMBL" id="U93277">
    <property type="protein sequence ID" value="AAC53356.1"/>
    <property type="molecule type" value="mRNA"/>
</dbReference>
<dbReference type="EMBL" id="Y14696">
    <property type="protein sequence ID" value="CAA75003.1"/>
    <property type="molecule type" value="mRNA"/>
</dbReference>
<dbReference type="EMBL" id="AK028724">
    <property type="protein sequence ID" value="BAC26085.1"/>
    <property type="molecule type" value="mRNA"/>
</dbReference>
<dbReference type="EMBL" id="AL645527">
    <property type="status" value="NOT_ANNOTATED_CDS"/>
    <property type="molecule type" value="Genomic_DNA"/>
</dbReference>
<dbReference type="EMBL" id="BC015253">
    <property type="protein sequence ID" value="AAH15253.1"/>
    <property type="molecule type" value="mRNA"/>
</dbReference>
<dbReference type="CCDS" id="CCDS24886.1"/>
<dbReference type="RefSeq" id="NP_033791.1">
    <property type="nucleotide sequence ID" value="NM_009661.4"/>
</dbReference>
<dbReference type="SMR" id="O35936"/>
<dbReference type="FunCoup" id="O35936">
    <property type="interactions" value="95"/>
</dbReference>
<dbReference type="STRING" id="10090.ENSMUSP00000021262"/>
<dbReference type="BindingDB" id="O35936"/>
<dbReference type="ChEMBL" id="CHEMBL4879413"/>
<dbReference type="SwissLipids" id="SLP:000000650"/>
<dbReference type="SwissLipids" id="SLP:000000742"/>
<dbReference type="PhosphoSitePlus" id="O35936"/>
<dbReference type="PaxDb" id="10090-ENSMUSP00000021262"/>
<dbReference type="ProteomicsDB" id="296100"/>
<dbReference type="Antibodypedia" id="12373">
    <property type="antibodies" value="280 antibodies from 31 providers"/>
</dbReference>
<dbReference type="DNASU" id="11688"/>
<dbReference type="Ensembl" id="ENSMUST00000021262.10">
    <property type="protein sequence ID" value="ENSMUSP00000021262.4"/>
    <property type="gene ID" value="ENSMUSG00000020891.12"/>
</dbReference>
<dbReference type="GeneID" id="11688"/>
<dbReference type="KEGG" id="mmu:11688"/>
<dbReference type="UCSC" id="uc007jpl.1">
    <property type="organism name" value="mouse"/>
</dbReference>
<dbReference type="AGR" id="MGI:1098228"/>
<dbReference type="CTD" id="11688"/>
<dbReference type="MGI" id="MGI:1098228">
    <property type="gene designation" value="Alox8"/>
</dbReference>
<dbReference type="VEuPathDB" id="HostDB:ENSMUSG00000020891"/>
<dbReference type="eggNOG" id="ENOG502QVKD">
    <property type="taxonomic scope" value="Eukaryota"/>
</dbReference>
<dbReference type="GeneTree" id="ENSGT00940000161510"/>
<dbReference type="HOGENOM" id="CLU_004282_3_3_1"/>
<dbReference type="InParanoid" id="O35936"/>
<dbReference type="OMA" id="TYPDEYF"/>
<dbReference type="OrthoDB" id="407298at2759"/>
<dbReference type="PhylomeDB" id="O35936"/>
<dbReference type="TreeFam" id="TF105320"/>
<dbReference type="Reactome" id="R-MMU-2142770">
    <property type="pathway name" value="Synthesis of 15-eicosatetraenoic acid derivatives"/>
</dbReference>
<dbReference type="UniPathway" id="UPA00881"/>
<dbReference type="BioGRID-ORCS" id="11688">
    <property type="hits" value="2 hits in 80 CRISPR screens"/>
</dbReference>
<dbReference type="ChiTaRS" id="Alox8">
    <property type="organism name" value="mouse"/>
</dbReference>
<dbReference type="PRO" id="PR:O35936"/>
<dbReference type="Proteomes" id="UP000000589">
    <property type="component" value="Chromosome 11"/>
</dbReference>
<dbReference type="RNAct" id="O35936">
    <property type="molecule type" value="protein"/>
</dbReference>
<dbReference type="Bgee" id="ENSMUSG00000020891">
    <property type="expression patterns" value="Expressed in lip and 36 other cell types or tissues"/>
</dbReference>
<dbReference type="ExpressionAtlas" id="O35936">
    <property type="expression patterns" value="baseline and differential"/>
</dbReference>
<dbReference type="GO" id="GO:0005912">
    <property type="term" value="C:adherens junction"/>
    <property type="evidence" value="ECO:0007669"/>
    <property type="project" value="Ensembl"/>
</dbReference>
<dbReference type="GO" id="GO:0005856">
    <property type="term" value="C:cytoskeleton"/>
    <property type="evidence" value="ECO:0007669"/>
    <property type="project" value="Ensembl"/>
</dbReference>
<dbReference type="GO" id="GO:0005829">
    <property type="term" value="C:cytosol"/>
    <property type="evidence" value="ECO:0000250"/>
    <property type="project" value="UniProtKB"/>
</dbReference>
<dbReference type="GO" id="GO:0005925">
    <property type="term" value="C:focal adhesion"/>
    <property type="evidence" value="ECO:0007669"/>
    <property type="project" value="Ensembl"/>
</dbReference>
<dbReference type="GO" id="GO:0005886">
    <property type="term" value="C:plasma membrane"/>
    <property type="evidence" value="ECO:0007669"/>
    <property type="project" value="Ensembl"/>
</dbReference>
<dbReference type="GO" id="GO:0050473">
    <property type="term" value="F:arachidonate 15-lipoxygenase activity"/>
    <property type="evidence" value="ECO:0000314"/>
    <property type="project" value="UniProtKB"/>
</dbReference>
<dbReference type="GO" id="GO:0036403">
    <property type="term" value="F:arachidonate 8(S)-lipoxygenase activity"/>
    <property type="evidence" value="ECO:0000314"/>
    <property type="project" value="UniProtKB"/>
</dbReference>
<dbReference type="GO" id="GO:0005509">
    <property type="term" value="F:calcium ion binding"/>
    <property type="evidence" value="ECO:0007669"/>
    <property type="project" value="Ensembl"/>
</dbReference>
<dbReference type="GO" id="GO:0005506">
    <property type="term" value="F:iron ion binding"/>
    <property type="evidence" value="ECO:0007669"/>
    <property type="project" value="Ensembl"/>
</dbReference>
<dbReference type="GO" id="GO:0016165">
    <property type="term" value="F:linoleate 13S-lipoxygenase activity"/>
    <property type="evidence" value="ECO:0007669"/>
    <property type="project" value="Ensembl"/>
</dbReference>
<dbReference type="GO" id="GO:1990136">
    <property type="term" value="F:linoleate 9S-lipoxygenase activity"/>
    <property type="evidence" value="ECO:0000314"/>
    <property type="project" value="UniProtKB"/>
</dbReference>
<dbReference type="GO" id="GO:0008289">
    <property type="term" value="F:lipid binding"/>
    <property type="evidence" value="ECO:0007669"/>
    <property type="project" value="UniProtKB-KW"/>
</dbReference>
<dbReference type="GO" id="GO:0019369">
    <property type="term" value="P:arachidonate metabolic process"/>
    <property type="evidence" value="ECO:0000314"/>
    <property type="project" value="UniProtKB"/>
</dbReference>
<dbReference type="GO" id="GO:1901696">
    <property type="term" value="P:cannabinoid biosynthetic process"/>
    <property type="evidence" value="ECO:0007669"/>
    <property type="project" value="Ensembl"/>
</dbReference>
<dbReference type="GO" id="GO:0071926">
    <property type="term" value="P:endocannabinoid signaling pathway"/>
    <property type="evidence" value="ECO:0007669"/>
    <property type="project" value="Ensembl"/>
</dbReference>
<dbReference type="GO" id="GO:0043651">
    <property type="term" value="P:linoleic acid metabolic process"/>
    <property type="evidence" value="ECO:0000314"/>
    <property type="project" value="UniProtKB"/>
</dbReference>
<dbReference type="GO" id="GO:0034440">
    <property type="term" value="P:lipid oxidation"/>
    <property type="evidence" value="ECO:0007669"/>
    <property type="project" value="InterPro"/>
</dbReference>
<dbReference type="GO" id="GO:2001303">
    <property type="term" value="P:lipoxin A4 biosynthetic process"/>
    <property type="evidence" value="ECO:0007669"/>
    <property type="project" value="Ensembl"/>
</dbReference>
<dbReference type="GO" id="GO:0019372">
    <property type="term" value="P:lipoxygenase pathway"/>
    <property type="evidence" value="ECO:0000314"/>
    <property type="project" value="UniProtKB"/>
</dbReference>
<dbReference type="GO" id="GO:0045786">
    <property type="term" value="P:negative regulation of cell cycle"/>
    <property type="evidence" value="ECO:0007669"/>
    <property type="project" value="Ensembl"/>
</dbReference>
<dbReference type="GO" id="GO:0008285">
    <property type="term" value="P:negative regulation of cell population proliferation"/>
    <property type="evidence" value="ECO:0007669"/>
    <property type="project" value="Ensembl"/>
</dbReference>
<dbReference type="GO" id="GO:0045926">
    <property type="term" value="P:negative regulation of growth"/>
    <property type="evidence" value="ECO:0007669"/>
    <property type="project" value="Ensembl"/>
</dbReference>
<dbReference type="GO" id="GO:0006644">
    <property type="term" value="P:phospholipid metabolic process"/>
    <property type="evidence" value="ECO:0000314"/>
    <property type="project" value="UniProtKB"/>
</dbReference>
<dbReference type="GO" id="GO:0032722">
    <property type="term" value="P:positive regulation of chemokine production"/>
    <property type="evidence" value="ECO:0007669"/>
    <property type="project" value="Ensembl"/>
</dbReference>
<dbReference type="GO" id="GO:0045618">
    <property type="term" value="P:positive regulation of keratinocyte differentiation"/>
    <property type="evidence" value="ECO:0000315"/>
    <property type="project" value="UniProtKB"/>
</dbReference>
<dbReference type="GO" id="GO:0010744">
    <property type="term" value="P:positive regulation of macrophage derived foam cell differentiation"/>
    <property type="evidence" value="ECO:0007669"/>
    <property type="project" value="Ensembl"/>
</dbReference>
<dbReference type="GO" id="GO:0035360">
    <property type="term" value="P:positive regulation of peroxisome proliferator activated receptor signaling pathway"/>
    <property type="evidence" value="ECO:0000315"/>
    <property type="project" value="UniProtKB"/>
</dbReference>
<dbReference type="CDD" id="cd01753">
    <property type="entry name" value="PLAT_LOX"/>
    <property type="match status" value="1"/>
</dbReference>
<dbReference type="FunFam" id="3.10.450.60:FF:000001">
    <property type="entry name" value="arachidonate 12-lipoxygenase, 12R-type"/>
    <property type="match status" value="1"/>
</dbReference>
<dbReference type="FunFam" id="1.20.245.10:FF:000001">
    <property type="entry name" value="Arachidonate 5-lipoxygenase a"/>
    <property type="match status" value="1"/>
</dbReference>
<dbReference type="FunFam" id="2.60.60.20:FF:000002">
    <property type="entry name" value="Arachidonate 5-lipoxygenase a"/>
    <property type="match status" value="1"/>
</dbReference>
<dbReference type="Gene3D" id="3.10.450.60">
    <property type="match status" value="1"/>
</dbReference>
<dbReference type="Gene3D" id="1.20.245.10">
    <property type="entry name" value="Lipoxygenase-1, Domain 5"/>
    <property type="match status" value="1"/>
</dbReference>
<dbReference type="Gene3D" id="2.60.60.20">
    <property type="entry name" value="PLAT/LH2 domain"/>
    <property type="match status" value="1"/>
</dbReference>
<dbReference type="InterPro" id="IPR000907">
    <property type="entry name" value="LipOase"/>
</dbReference>
<dbReference type="InterPro" id="IPR013819">
    <property type="entry name" value="LipOase_C"/>
</dbReference>
<dbReference type="InterPro" id="IPR036226">
    <property type="entry name" value="LipOase_C_sf"/>
</dbReference>
<dbReference type="InterPro" id="IPR020834">
    <property type="entry name" value="LipOase_CS"/>
</dbReference>
<dbReference type="InterPro" id="IPR020833">
    <property type="entry name" value="LipOase_Fe_BS"/>
</dbReference>
<dbReference type="InterPro" id="IPR001885">
    <property type="entry name" value="LipOase_mml"/>
</dbReference>
<dbReference type="InterPro" id="IPR001024">
    <property type="entry name" value="PLAT/LH2_dom"/>
</dbReference>
<dbReference type="InterPro" id="IPR036392">
    <property type="entry name" value="PLAT/LH2_dom_sf"/>
</dbReference>
<dbReference type="InterPro" id="IPR042062">
    <property type="entry name" value="PLAT_LOX_verte"/>
</dbReference>
<dbReference type="PANTHER" id="PTHR11771">
    <property type="entry name" value="LIPOXYGENASE"/>
    <property type="match status" value="1"/>
</dbReference>
<dbReference type="Pfam" id="PF00305">
    <property type="entry name" value="Lipoxygenase"/>
    <property type="match status" value="1"/>
</dbReference>
<dbReference type="Pfam" id="PF01477">
    <property type="entry name" value="PLAT"/>
    <property type="match status" value="1"/>
</dbReference>
<dbReference type="PRINTS" id="PR00087">
    <property type="entry name" value="LIPOXYGENASE"/>
</dbReference>
<dbReference type="PRINTS" id="PR00467">
    <property type="entry name" value="MAMLPOXGNASE"/>
</dbReference>
<dbReference type="SMART" id="SM00308">
    <property type="entry name" value="LH2"/>
    <property type="match status" value="1"/>
</dbReference>
<dbReference type="SUPFAM" id="SSF49723">
    <property type="entry name" value="Lipase/lipooxygenase domain (PLAT/LH2 domain)"/>
    <property type="match status" value="1"/>
</dbReference>
<dbReference type="SUPFAM" id="SSF48484">
    <property type="entry name" value="Lipoxigenase"/>
    <property type="match status" value="1"/>
</dbReference>
<dbReference type="PROSITE" id="PS00711">
    <property type="entry name" value="LIPOXYGENASE_1"/>
    <property type="match status" value="1"/>
</dbReference>
<dbReference type="PROSITE" id="PS00081">
    <property type="entry name" value="LIPOXYGENASE_2"/>
    <property type="match status" value="1"/>
</dbReference>
<dbReference type="PROSITE" id="PS51393">
    <property type="entry name" value="LIPOXYGENASE_3"/>
    <property type="match status" value="1"/>
</dbReference>
<dbReference type="PROSITE" id="PS50095">
    <property type="entry name" value="PLAT"/>
    <property type="match status" value="1"/>
</dbReference>
<proteinExistence type="evidence at protein level"/>
<feature type="chain" id="PRO_0000220701" description="Polyunsaturated fatty acid lipoxygenase ALOX8">
    <location>
        <begin position="1"/>
        <end position="677"/>
    </location>
</feature>
<feature type="domain" description="PLAT" evidence="3">
    <location>
        <begin position="2"/>
        <end position="125"/>
    </location>
</feature>
<feature type="domain" description="Lipoxygenase" evidence="4">
    <location>
        <begin position="126"/>
        <end position="677"/>
    </location>
</feature>
<feature type="binding site" evidence="2">
    <location>
        <position position="15"/>
    </location>
    <ligand>
        <name>Ca(2+)</name>
        <dbReference type="ChEBI" id="CHEBI:29108"/>
        <label>1</label>
    </ligand>
</feature>
<feature type="binding site" evidence="2">
    <location>
        <position position="17"/>
    </location>
    <ligand>
        <name>Ca(2+)</name>
        <dbReference type="ChEBI" id="CHEBI:29108"/>
        <label>1</label>
    </ligand>
</feature>
<feature type="binding site" evidence="2">
    <location>
        <position position="39"/>
    </location>
    <ligand>
        <name>Ca(2+)</name>
        <dbReference type="ChEBI" id="CHEBI:29108"/>
        <label>2</label>
    </ligand>
</feature>
<feature type="binding site" evidence="2">
    <location>
        <position position="40"/>
    </location>
    <ligand>
        <name>Ca(2+)</name>
        <dbReference type="ChEBI" id="CHEBI:29108"/>
        <label>2</label>
    </ligand>
</feature>
<feature type="binding site" evidence="2">
    <location>
        <position position="42"/>
    </location>
    <ligand>
        <name>Ca(2+)</name>
        <dbReference type="ChEBI" id="CHEBI:29108"/>
        <label>2</label>
    </ligand>
</feature>
<feature type="binding site" evidence="2">
    <location>
        <position position="44"/>
    </location>
    <ligand>
        <name>Ca(2+)</name>
        <dbReference type="ChEBI" id="CHEBI:29108"/>
        <label>2</label>
    </ligand>
</feature>
<feature type="binding site" evidence="2">
    <location>
        <position position="86"/>
    </location>
    <ligand>
        <name>Ca(2+)</name>
        <dbReference type="ChEBI" id="CHEBI:29108"/>
        <label>1</label>
    </ligand>
</feature>
<feature type="binding site" evidence="2">
    <location>
        <position position="87"/>
    </location>
    <ligand>
        <name>Ca(2+)</name>
        <dbReference type="ChEBI" id="CHEBI:29108"/>
        <label>1</label>
    </ligand>
</feature>
<feature type="binding site" evidence="4">
    <location>
        <position position="374"/>
    </location>
    <ligand>
        <name>Fe cation</name>
        <dbReference type="ChEBI" id="CHEBI:24875"/>
        <note>catalytic</note>
    </ligand>
</feature>
<feature type="binding site" evidence="4">
    <location>
        <position position="379"/>
    </location>
    <ligand>
        <name>Fe cation</name>
        <dbReference type="ChEBI" id="CHEBI:24875"/>
        <note>catalytic</note>
    </ligand>
</feature>
<feature type="binding site" evidence="4">
    <location>
        <position position="554"/>
    </location>
    <ligand>
        <name>Fe cation</name>
        <dbReference type="ChEBI" id="CHEBI:24875"/>
        <note>catalytic</note>
    </ligand>
</feature>
<feature type="binding site" evidence="4">
    <location>
        <position position="677"/>
    </location>
    <ligand>
        <name>Fe cation</name>
        <dbReference type="ChEBI" id="CHEBI:24875"/>
        <note>catalytic</note>
    </ligand>
</feature>
<feature type="sequence variant" description="In clone K12.">
    <original>E</original>
    <variation>G</variation>
    <location>
        <position position="32"/>
    </location>
</feature>
<feature type="sequence variant" description="In clone G2.">
    <original>L</original>
    <variation>M</variation>
    <location>
        <position position="38"/>
    </location>
</feature>
<feature type="sequence variant" description="In clone K12.">
    <original>P</original>
    <variation>R</variation>
    <location>
        <position position="58"/>
    </location>
</feature>
<feature type="sequence variant" description="In clones G2, G5, G11 and K1.">
    <original>V</original>
    <variation>A</variation>
    <location>
        <position position="76"/>
    </location>
</feature>
<feature type="sequence variant" description="In clone K7.">
    <original>I</original>
    <variation>V</variation>
    <location>
        <position position="413"/>
    </location>
</feature>
<feature type="sequence variant" description="In clones G2, G5 and G11.">
    <original>R</original>
    <variation>Q</variation>
    <location>
        <position position="536"/>
    </location>
</feature>
<feature type="mutagenesis site" description="Loss of enzymatic activity." evidence="10">
    <original>H</original>
    <variation>L</variation>
    <location>
        <position position="374"/>
    </location>
</feature>
<feature type="mutagenesis site" description="Retains catalytic activity indicating it is not required for iron ligand-binding." evidence="7">
    <original>S</original>
    <variation>A</variation>
    <variation>H</variation>
    <variation>N</variation>
    <location>
        <position position="558"/>
    </location>
</feature>
<feature type="mutagenesis site" description="Changes the stereoselectivity of the oxygenation reaction to produce (15S)-HPETE instead of (8S)-HPETE. Completely changes the stereoselectivity; when associated with V-604." evidence="5">
    <original>Y</original>
    <variation>D</variation>
    <location>
        <position position="603"/>
    </location>
</feature>
<feature type="mutagenesis site" description="Changes the stereoselectivity of the oxygenation reaction to produce (15S)-HPETE instead of (8S)-HPETE. Completely changes the stereoselectivity; when associated with D-603." evidence="5">
    <original>H</original>
    <variation>V</variation>
    <location>
        <position position="604"/>
    </location>
</feature>
<name>ALOX8_MOUSE</name>
<organism>
    <name type="scientific">Mus musculus</name>
    <name type="common">Mouse</name>
    <dbReference type="NCBI Taxonomy" id="10090"/>
    <lineage>
        <taxon>Eukaryota</taxon>
        <taxon>Metazoa</taxon>
        <taxon>Chordata</taxon>
        <taxon>Craniata</taxon>
        <taxon>Vertebrata</taxon>
        <taxon>Euteleostomi</taxon>
        <taxon>Mammalia</taxon>
        <taxon>Eutheria</taxon>
        <taxon>Euarchontoglires</taxon>
        <taxon>Glires</taxon>
        <taxon>Rodentia</taxon>
        <taxon>Myomorpha</taxon>
        <taxon>Muroidea</taxon>
        <taxon>Muridae</taxon>
        <taxon>Murinae</taxon>
        <taxon>Mus</taxon>
        <taxon>Mus</taxon>
    </lineage>
</organism>
<reference key="1">
    <citation type="journal article" date="1997" name="J. Biol. Chem.">
        <title>Molecular cloning and functional expression of a phorbol ester-inducible 8S-lipoxygenase from mouse skin.</title>
        <authorList>
            <person name="Jisaka M."/>
            <person name="Kim R.B."/>
            <person name="Boeglin W.E."/>
            <person name="Nanney L.B."/>
            <person name="Brash A.R."/>
        </authorList>
    </citation>
    <scope>NUCLEOTIDE SEQUENCE [MRNA]</scope>
    <scope>FUNCTION IN ARACHIDONATE AND LINOLEATE METABOLISM</scope>
    <scope>INDUCTION BY PHORBOL ESTER</scope>
    <scope>TISSUE SPECIFICITY</scope>
    <scope>CATALYTIC ACTIVITY</scope>
    <source>
        <tissue>Epidermis</tissue>
    </source>
</reference>
<reference key="2">
    <citation type="journal article" date="1998" name="Biochim. Biophys. Acta">
        <title>cDNA cloning of a 8-lipoxygenase and a novel epidermis-type lipoxygenase from phorbol ester-treated mouse skin.</title>
        <authorList>
            <person name="Krieg P."/>
            <person name="Kinzig A."/>
            <person name="Heidt M."/>
            <person name="Marks F."/>
            <person name="Fuerstenberger G."/>
        </authorList>
    </citation>
    <scope>NUCLEOTIDE SEQUENCE [MRNA]</scope>
    <scope>TISSUE SPECIFICITY</scope>
    <source>
        <strain>NMRI</strain>
        <tissue>Epidermis</tissue>
    </source>
</reference>
<reference key="3">
    <citation type="journal article" date="2005" name="Science">
        <title>The transcriptional landscape of the mammalian genome.</title>
        <authorList>
            <person name="Carninci P."/>
            <person name="Kasukawa T."/>
            <person name="Katayama S."/>
            <person name="Gough J."/>
            <person name="Frith M.C."/>
            <person name="Maeda N."/>
            <person name="Oyama R."/>
            <person name="Ravasi T."/>
            <person name="Lenhard B."/>
            <person name="Wells C."/>
            <person name="Kodzius R."/>
            <person name="Shimokawa K."/>
            <person name="Bajic V.B."/>
            <person name="Brenner S.E."/>
            <person name="Batalov S."/>
            <person name="Forrest A.R."/>
            <person name="Zavolan M."/>
            <person name="Davis M.J."/>
            <person name="Wilming L.G."/>
            <person name="Aidinis V."/>
            <person name="Allen J.E."/>
            <person name="Ambesi-Impiombato A."/>
            <person name="Apweiler R."/>
            <person name="Aturaliya R.N."/>
            <person name="Bailey T.L."/>
            <person name="Bansal M."/>
            <person name="Baxter L."/>
            <person name="Beisel K.W."/>
            <person name="Bersano T."/>
            <person name="Bono H."/>
            <person name="Chalk A.M."/>
            <person name="Chiu K.P."/>
            <person name="Choudhary V."/>
            <person name="Christoffels A."/>
            <person name="Clutterbuck D.R."/>
            <person name="Crowe M.L."/>
            <person name="Dalla E."/>
            <person name="Dalrymple B.P."/>
            <person name="de Bono B."/>
            <person name="Della Gatta G."/>
            <person name="di Bernardo D."/>
            <person name="Down T."/>
            <person name="Engstrom P."/>
            <person name="Fagiolini M."/>
            <person name="Faulkner G."/>
            <person name="Fletcher C.F."/>
            <person name="Fukushima T."/>
            <person name="Furuno M."/>
            <person name="Futaki S."/>
            <person name="Gariboldi M."/>
            <person name="Georgii-Hemming P."/>
            <person name="Gingeras T.R."/>
            <person name="Gojobori T."/>
            <person name="Green R.E."/>
            <person name="Gustincich S."/>
            <person name="Harbers M."/>
            <person name="Hayashi Y."/>
            <person name="Hensch T.K."/>
            <person name="Hirokawa N."/>
            <person name="Hill D."/>
            <person name="Huminiecki L."/>
            <person name="Iacono M."/>
            <person name="Ikeo K."/>
            <person name="Iwama A."/>
            <person name="Ishikawa T."/>
            <person name="Jakt M."/>
            <person name="Kanapin A."/>
            <person name="Katoh M."/>
            <person name="Kawasawa Y."/>
            <person name="Kelso J."/>
            <person name="Kitamura H."/>
            <person name="Kitano H."/>
            <person name="Kollias G."/>
            <person name="Krishnan S.P."/>
            <person name="Kruger A."/>
            <person name="Kummerfeld S.K."/>
            <person name="Kurochkin I.V."/>
            <person name="Lareau L.F."/>
            <person name="Lazarevic D."/>
            <person name="Lipovich L."/>
            <person name="Liu J."/>
            <person name="Liuni S."/>
            <person name="McWilliam S."/>
            <person name="Madan Babu M."/>
            <person name="Madera M."/>
            <person name="Marchionni L."/>
            <person name="Matsuda H."/>
            <person name="Matsuzawa S."/>
            <person name="Miki H."/>
            <person name="Mignone F."/>
            <person name="Miyake S."/>
            <person name="Morris K."/>
            <person name="Mottagui-Tabar S."/>
            <person name="Mulder N."/>
            <person name="Nakano N."/>
            <person name="Nakauchi H."/>
            <person name="Ng P."/>
            <person name="Nilsson R."/>
            <person name="Nishiguchi S."/>
            <person name="Nishikawa S."/>
            <person name="Nori F."/>
            <person name="Ohara O."/>
            <person name="Okazaki Y."/>
            <person name="Orlando V."/>
            <person name="Pang K.C."/>
            <person name="Pavan W.J."/>
            <person name="Pavesi G."/>
            <person name="Pesole G."/>
            <person name="Petrovsky N."/>
            <person name="Piazza S."/>
            <person name="Reed J."/>
            <person name="Reid J.F."/>
            <person name="Ring B.Z."/>
            <person name="Ringwald M."/>
            <person name="Rost B."/>
            <person name="Ruan Y."/>
            <person name="Salzberg S.L."/>
            <person name="Sandelin A."/>
            <person name="Schneider C."/>
            <person name="Schoenbach C."/>
            <person name="Sekiguchi K."/>
            <person name="Semple C.A."/>
            <person name="Seno S."/>
            <person name="Sessa L."/>
            <person name="Sheng Y."/>
            <person name="Shibata Y."/>
            <person name="Shimada H."/>
            <person name="Shimada K."/>
            <person name="Silva D."/>
            <person name="Sinclair B."/>
            <person name="Sperling S."/>
            <person name="Stupka E."/>
            <person name="Sugiura K."/>
            <person name="Sultana R."/>
            <person name="Takenaka Y."/>
            <person name="Taki K."/>
            <person name="Tammoja K."/>
            <person name="Tan S.L."/>
            <person name="Tang S."/>
            <person name="Taylor M.S."/>
            <person name="Tegner J."/>
            <person name="Teichmann S.A."/>
            <person name="Ueda H.R."/>
            <person name="van Nimwegen E."/>
            <person name="Verardo R."/>
            <person name="Wei C.L."/>
            <person name="Yagi K."/>
            <person name="Yamanishi H."/>
            <person name="Zabarovsky E."/>
            <person name="Zhu S."/>
            <person name="Zimmer A."/>
            <person name="Hide W."/>
            <person name="Bult C."/>
            <person name="Grimmond S.M."/>
            <person name="Teasdale R.D."/>
            <person name="Liu E.T."/>
            <person name="Brusic V."/>
            <person name="Quackenbush J."/>
            <person name="Wahlestedt C."/>
            <person name="Mattick J.S."/>
            <person name="Hume D.A."/>
            <person name="Kai C."/>
            <person name="Sasaki D."/>
            <person name="Tomaru Y."/>
            <person name="Fukuda S."/>
            <person name="Kanamori-Katayama M."/>
            <person name="Suzuki M."/>
            <person name="Aoki J."/>
            <person name="Arakawa T."/>
            <person name="Iida J."/>
            <person name="Imamura K."/>
            <person name="Itoh M."/>
            <person name="Kato T."/>
            <person name="Kawaji H."/>
            <person name="Kawagashira N."/>
            <person name="Kawashima T."/>
            <person name="Kojima M."/>
            <person name="Kondo S."/>
            <person name="Konno H."/>
            <person name="Nakano K."/>
            <person name="Ninomiya N."/>
            <person name="Nishio T."/>
            <person name="Okada M."/>
            <person name="Plessy C."/>
            <person name="Shibata K."/>
            <person name="Shiraki T."/>
            <person name="Suzuki S."/>
            <person name="Tagami M."/>
            <person name="Waki K."/>
            <person name="Watahiki A."/>
            <person name="Okamura-Oho Y."/>
            <person name="Suzuki H."/>
            <person name="Kawai J."/>
            <person name="Hayashizaki Y."/>
        </authorList>
    </citation>
    <scope>NUCLEOTIDE SEQUENCE [LARGE SCALE MRNA]</scope>
    <source>
        <strain>C57BL/6J</strain>
        <tissue>Skin</tissue>
    </source>
</reference>
<reference key="4">
    <citation type="journal article" date="2009" name="PLoS Biol.">
        <title>Lineage-specific biology revealed by a finished genome assembly of the mouse.</title>
        <authorList>
            <person name="Church D.M."/>
            <person name="Goodstadt L."/>
            <person name="Hillier L.W."/>
            <person name="Zody M.C."/>
            <person name="Goldstein S."/>
            <person name="She X."/>
            <person name="Bult C.J."/>
            <person name="Agarwala R."/>
            <person name="Cherry J.L."/>
            <person name="DiCuccio M."/>
            <person name="Hlavina W."/>
            <person name="Kapustin Y."/>
            <person name="Meric P."/>
            <person name="Maglott D."/>
            <person name="Birtle Z."/>
            <person name="Marques A.C."/>
            <person name="Graves T."/>
            <person name="Zhou S."/>
            <person name="Teague B."/>
            <person name="Potamousis K."/>
            <person name="Churas C."/>
            <person name="Place M."/>
            <person name="Herschleb J."/>
            <person name="Runnheim R."/>
            <person name="Forrest D."/>
            <person name="Amos-Landgraf J."/>
            <person name="Schwartz D.C."/>
            <person name="Cheng Z."/>
            <person name="Lindblad-Toh K."/>
            <person name="Eichler E.E."/>
            <person name="Ponting C.P."/>
        </authorList>
    </citation>
    <scope>NUCLEOTIDE SEQUENCE [LARGE SCALE GENOMIC DNA]</scope>
    <source>
        <strain>C57BL/6J</strain>
    </source>
</reference>
<reference key="5">
    <citation type="journal article" date="2004" name="Genome Res.">
        <title>The status, quality, and expansion of the NIH full-length cDNA project: the Mammalian Gene Collection (MGC).</title>
        <authorList>
            <consortium name="The MGC Project Team"/>
        </authorList>
    </citation>
    <scope>NUCLEOTIDE SEQUENCE [LARGE SCALE MRNA]</scope>
    <source>
        <strain>FVB/N</strain>
        <tissue>Kidney</tissue>
    </source>
</reference>
<reference key="6">
    <citation type="journal article" date="2000" name="Cell Growth Differ.">
        <title>8S-lipoxygenase products activate peroxisome proliferator-activated receptor alpha and induce differentiation in murine keratinocytes.</title>
        <authorList>
            <person name="Muga S.J."/>
            <person name="Thuillier P."/>
            <person name="Pavone A."/>
            <person name="Rundhaug J.E."/>
            <person name="Boeglin W.E."/>
            <person name="Jisaka M."/>
            <person name="Brash A.R."/>
            <person name="Fischer S.M."/>
        </authorList>
    </citation>
    <scope>FUNCTION IN KERATINOCYTE DIFFERENTIATION</scope>
    <scope>CATALYTIC ACTIVITY</scope>
</reference>
<reference key="7">
    <citation type="journal article" date="2000" name="J. Biol. Chem.">
        <title>Identification of amino acid determinants of the positional specificity of mouse 8S-lipoxygenase and human 15S-lipoxygenase-2.</title>
        <authorList>
            <person name="Jisaka M."/>
            <person name="Kim R.B."/>
            <person name="Boeglin W.E."/>
            <person name="Brash A.R."/>
        </authorList>
    </citation>
    <scope>FUNCTION</scope>
    <scope>CATALYTIC ACTIVITY</scope>
    <scope>MUTAGENESIS OF TYR-603 AND HIS-604</scope>
</reference>
<reference key="8">
    <citation type="journal article" date="2001" name="Arch. Biochem. Biophys.">
        <title>Site-directed mutagenesis studies on a putative fifth iron ligand of mouse 8S-lipoxygenase: retention of catalytic activity on mutation of serine-558 to asparagine, histidine, or alanine.</title>
        <authorList>
            <person name="Jisaka M."/>
            <person name="Boeglin W.E."/>
            <person name="Kim R.B."/>
            <person name="Brash A.R."/>
        </authorList>
    </citation>
    <scope>MUTAGENESIS OF SER-558</scope>
</reference>
<reference key="9">
    <citation type="journal article" date="2005" name="Biochem. Biophys. Res. Commun.">
        <title>Synthesis of 8,9-leukotriene A4 by murine 8-lipoxygenase.</title>
        <authorList>
            <person name="Kawajiri H."/>
            <person name="Piao Y."/>
            <person name="Takahashi Y."/>
            <person name="Murakami T."/>
            <person name="Hamanaka N."/>
            <person name="Yoshimoto T."/>
        </authorList>
    </citation>
    <scope>FUNCTION AS A 8S-LIPOXYGENASE</scope>
    <scope>CATALYTIC ACTIVITY</scope>
    <scope>MUTAGENESIS OF HIS-374</scope>
</reference>
<reference key="10">
    <citation type="journal article" date="2005" name="Biochem. Biophys. Res. Commun.">
        <title>Double dioxygenation by mouse 8S-lipoxygenase: specific formation of a potent peroxisome proliferator-activated receptor alpha agonist.</title>
        <authorList>
            <person name="Jisaka M."/>
            <person name="Iwanaga C."/>
            <person name="Takahashi N."/>
            <person name="Goto T."/>
            <person name="Kawada T."/>
            <person name="Yamamoto T."/>
            <person name="Ikeda I."/>
            <person name="Nishimura K."/>
            <person name="Nagaya T."/>
            <person name="Fushiki T."/>
            <person name="Yokota K."/>
        </authorList>
    </citation>
    <scope>CATALYTIC ACTIVITY</scope>
    <scope>BIOPHYSICOCHEMICAL PROPERTIES</scope>
    <scope>KINETIC PARAMETERS</scope>
    <scope>FUNCTION</scope>
</reference>
<reference key="11">
    <citation type="journal article" date="2005" name="Oncogene">
        <title>An antitumorigenic role for murine 8S-lipoxygenase in skin carcinogenesis.</title>
        <authorList>
            <person name="Kim E."/>
            <person name="Rundhaug J.E."/>
            <person name="Benavides F."/>
            <person name="Yang P."/>
            <person name="Newman R.A."/>
            <person name="Fischer S.M."/>
        </authorList>
    </citation>
    <scope>CATALYTIC ACTIVITY</scope>
    <scope>FUNCTION</scope>
</reference>
<reference key="12">
    <citation type="journal article" date="2016" name="J. Biol. Chem.">
        <title>Membrane-dependent Activities of Human 15-LOX-2 and Its Murine Counterpart: IMPLICATIONS FOR MURINE MODELS OF ATHEROSCLEROSIS.</title>
        <authorList>
            <person name="Bender G."/>
            <person name="Schexnaydre E.E."/>
            <person name="Murphy R.C."/>
            <person name="Uhlson C."/>
            <person name="Newcomer M.E."/>
        </authorList>
    </citation>
    <scope>FUNCTION</scope>
    <scope>CATALYTIC ACTIVITY</scope>
    <scope>BIOPHYSICOCHEMICAL PROPERTIES</scope>
</reference>
<gene>
    <name evidence="18" type="primary">Alox8</name>
    <name type="synonym">Alox15b</name>
</gene>
<evidence type="ECO:0000250" key="1"/>
<evidence type="ECO:0000250" key="2">
    <source>
        <dbReference type="UniProtKB" id="O15296"/>
    </source>
</evidence>
<evidence type="ECO:0000255" key="3">
    <source>
        <dbReference type="PROSITE-ProRule" id="PRU00152"/>
    </source>
</evidence>
<evidence type="ECO:0000255" key="4">
    <source>
        <dbReference type="PROSITE-ProRule" id="PRU00726"/>
    </source>
</evidence>
<evidence type="ECO:0000269" key="5">
    <source>
    </source>
</evidence>
<evidence type="ECO:0000269" key="6">
    <source>
    </source>
</evidence>
<evidence type="ECO:0000269" key="7">
    <source>
    </source>
</evidence>
<evidence type="ECO:0000269" key="8">
    <source>
    </source>
</evidence>
<evidence type="ECO:0000269" key="9">
    <source>
    </source>
</evidence>
<evidence type="ECO:0000269" key="10">
    <source>
    </source>
</evidence>
<evidence type="ECO:0000269" key="11">
    <source>
    </source>
</evidence>
<evidence type="ECO:0000269" key="12">
    <source>
    </source>
</evidence>
<evidence type="ECO:0000269" key="13">
    <source>
    </source>
</evidence>
<evidence type="ECO:0000305" key="14"/>
<evidence type="ECO:0000305" key="15">
    <source>
    </source>
</evidence>
<evidence type="ECO:0000305" key="16">
    <source>
    </source>
</evidence>
<evidence type="ECO:0000305" key="17">
    <source>
    </source>
</evidence>
<evidence type="ECO:0000312" key="18">
    <source>
        <dbReference type="MGI" id="MGI:1098228"/>
    </source>
</evidence>